<proteinExistence type="evidence at protein level"/>
<dbReference type="EC" id="3.5.1.19" evidence="3 8"/>
<dbReference type="EC" id="3.5.1.-" evidence="8"/>
<dbReference type="EMBL" id="M26934">
    <property type="protein sequence ID" value="AAA23447.1"/>
    <property type="molecule type" value="Genomic_DNA"/>
</dbReference>
<dbReference type="EMBL" id="U00096">
    <property type="protein sequence ID" value="AAC74838.2"/>
    <property type="molecule type" value="Genomic_DNA"/>
</dbReference>
<dbReference type="EMBL" id="AP009048">
    <property type="protein sequence ID" value="BAA15559.1"/>
    <property type="molecule type" value="Genomic_DNA"/>
</dbReference>
<dbReference type="PIR" id="H64936">
    <property type="entry name" value="QQECA5"/>
</dbReference>
<dbReference type="RefSeq" id="NP_416282.4">
    <property type="nucleotide sequence ID" value="NC_000913.3"/>
</dbReference>
<dbReference type="RefSeq" id="WP_001135066.1">
    <property type="nucleotide sequence ID" value="NZ_SSZK01000001.1"/>
</dbReference>
<dbReference type="SMR" id="P21369"/>
<dbReference type="BioGRID" id="4262963">
    <property type="interactions" value="21"/>
</dbReference>
<dbReference type="DIP" id="DIP-10520N"/>
<dbReference type="FunCoup" id="P21369">
    <property type="interactions" value="570"/>
</dbReference>
<dbReference type="IntAct" id="P21369">
    <property type="interactions" value="5"/>
</dbReference>
<dbReference type="STRING" id="511145.b1768"/>
<dbReference type="jPOST" id="P21369"/>
<dbReference type="PaxDb" id="511145-b1768"/>
<dbReference type="EnsemblBacteria" id="AAC74838">
    <property type="protein sequence ID" value="AAC74838"/>
    <property type="gene ID" value="b1768"/>
</dbReference>
<dbReference type="GeneID" id="946276"/>
<dbReference type="KEGG" id="ecj:JW1757"/>
<dbReference type="KEGG" id="eco:b1768"/>
<dbReference type="KEGG" id="ecoc:C3026_10095"/>
<dbReference type="PATRIC" id="fig|1411691.4.peg.486"/>
<dbReference type="EchoBASE" id="EB1125"/>
<dbReference type="eggNOG" id="COG1335">
    <property type="taxonomic scope" value="Bacteria"/>
</dbReference>
<dbReference type="HOGENOM" id="CLU_068979_13_1_6"/>
<dbReference type="InParanoid" id="P21369"/>
<dbReference type="OMA" id="DFVDSWP"/>
<dbReference type="OrthoDB" id="9791276at2"/>
<dbReference type="PhylomeDB" id="P21369"/>
<dbReference type="BioCyc" id="EcoCyc:NICOTINAMID-MONOMER"/>
<dbReference type="BioCyc" id="MetaCyc:NICOTINAMID-MONOMER"/>
<dbReference type="UniPathway" id="UPA00830">
    <property type="reaction ID" value="UER00790"/>
</dbReference>
<dbReference type="PRO" id="PR:P21369"/>
<dbReference type="Proteomes" id="UP000000625">
    <property type="component" value="Chromosome"/>
</dbReference>
<dbReference type="GO" id="GO:0005829">
    <property type="term" value="C:cytosol"/>
    <property type="evidence" value="ECO:0000314"/>
    <property type="project" value="EcoCyc"/>
</dbReference>
<dbReference type="GO" id="GO:0016811">
    <property type="term" value="F:hydrolase activity, acting on carbon-nitrogen (but not peptide) bonds, in linear amides"/>
    <property type="evidence" value="ECO:0000318"/>
    <property type="project" value="GO_Central"/>
</dbReference>
<dbReference type="GO" id="GO:0046872">
    <property type="term" value="F:metal ion binding"/>
    <property type="evidence" value="ECO:0007669"/>
    <property type="project" value="UniProtKB-KW"/>
</dbReference>
<dbReference type="GO" id="GO:0008936">
    <property type="term" value="F:nicotinamidase activity"/>
    <property type="evidence" value="ECO:0000314"/>
    <property type="project" value="EcoCyc"/>
</dbReference>
<dbReference type="GO" id="GO:0019365">
    <property type="term" value="P:pyridine nucleotide salvage"/>
    <property type="evidence" value="ECO:0000315"/>
    <property type="project" value="EcoCyc"/>
</dbReference>
<dbReference type="CDD" id="cd01011">
    <property type="entry name" value="nicotinamidase"/>
    <property type="match status" value="1"/>
</dbReference>
<dbReference type="FunFam" id="3.40.50.850:FF:000006">
    <property type="entry name" value="Bifunctional pyrazinamidase/nicotinamidase"/>
    <property type="match status" value="1"/>
</dbReference>
<dbReference type="Gene3D" id="3.40.50.850">
    <property type="entry name" value="Isochorismatase-like"/>
    <property type="match status" value="1"/>
</dbReference>
<dbReference type="InterPro" id="IPR000868">
    <property type="entry name" value="Isochorismatase-like_dom"/>
</dbReference>
<dbReference type="InterPro" id="IPR036380">
    <property type="entry name" value="Isochorismatase-like_sf"/>
</dbReference>
<dbReference type="InterPro" id="IPR052347">
    <property type="entry name" value="Isochorismatase_Nicotinamidase"/>
</dbReference>
<dbReference type="NCBIfam" id="NF008623">
    <property type="entry name" value="PRK11609.1"/>
    <property type="match status" value="1"/>
</dbReference>
<dbReference type="PANTHER" id="PTHR11080:SF2">
    <property type="entry name" value="LD05707P"/>
    <property type="match status" value="1"/>
</dbReference>
<dbReference type="PANTHER" id="PTHR11080">
    <property type="entry name" value="PYRAZINAMIDASE/NICOTINAMIDASE"/>
    <property type="match status" value="1"/>
</dbReference>
<dbReference type="Pfam" id="PF00857">
    <property type="entry name" value="Isochorismatase"/>
    <property type="match status" value="1"/>
</dbReference>
<dbReference type="SUPFAM" id="SSF52499">
    <property type="entry name" value="Isochorismatase-like hydrolases"/>
    <property type="match status" value="1"/>
</dbReference>
<comment type="function">
    <text evidence="3 8">Catalyzes the deamidation of nicotinamide (NAM) into nicotinate (PubMed:4399474, PubMed:8726014). Likely functions in the cyclical salvage pathway for production of NAD from nicotinamide (PubMed:4399474).</text>
</comment>
<comment type="function">
    <text evidence="8">Is also able to hydrolyze the first-line antituberculous drug pyrazinamide (PZA) into pyrazinoic acid in vitro, but this reaction is not considered to be physiologically relevant.</text>
</comment>
<comment type="catalytic activity">
    <reaction evidence="3 8">
        <text>nicotinamide + H2O = nicotinate + NH4(+)</text>
        <dbReference type="Rhea" id="RHEA:14545"/>
        <dbReference type="ChEBI" id="CHEBI:15377"/>
        <dbReference type="ChEBI" id="CHEBI:17154"/>
        <dbReference type="ChEBI" id="CHEBI:28938"/>
        <dbReference type="ChEBI" id="CHEBI:32544"/>
        <dbReference type="EC" id="3.5.1.19"/>
    </reaction>
</comment>
<comment type="catalytic activity">
    <reaction evidence="8">
        <text>pyrazinamide + H2O = pyrazine-2-carboxylate + NH4(+)</text>
        <dbReference type="Rhea" id="RHEA:35063"/>
        <dbReference type="ChEBI" id="CHEBI:15377"/>
        <dbReference type="ChEBI" id="CHEBI:28938"/>
        <dbReference type="ChEBI" id="CHEBI:45285"/>
        <dbReference type="ChEBI" id="CHEBI:71266"/>
    </reaction>
</comment>
<comment type="biophysicochemical properties">
    <kinetics>
        <KM evidence="3">70 uM for nicotinamide</KM>
        <Vmax evidence="3">560.0 umol/min/mg enzyme for the nicotinamidase activity</Vmax>
    </kinetics>
    <phDependence>
        <text evidence="3">Optimum pH is 7.2.</text>
    </phDependence>
</comment>
<comment type="pathway">
    <text evidence="7">Cofactor biosynthesis; nicotinate biosynthesis; nicotinate from nicotinamide: step 1/1.</text>
</comment>
<comment type="induction">
    <text evidence="3">Is constitutively expressed in very small amounts in E.coli.</text>
</comment>
<comment type="similarity">
    <text evidence="6">Belongs to the isochorismatase family.</text>
</comment>
<feature type="chain" id="PRO_0000206557" description="Nicotinamidase">
    <location>
        <begin position="1"/>
        <end position="213"/>
    </location>
</feature>
<feature type="active site" description="Proton acceptor" evidence="1">
    <location>
        <position position="10"/>
    </location>
</feature>
<feature type="active site" evidence="1">
    <location>
        <position position="111"/>
    </location>
</feature>
<feature type="active site" description="Nucleophile" evidence="1">
    <location>
        <position position="156"/>
    </location>
</feature>
<feature type="binding site" evidence="2">
    <location>
        <position position="52"/>
    </location>
    <ligand>
        <name>Zn(2+)</name>
        <dbReference type="ChEBI" id="CHEBI:29105"/>
    </ligand>
</feature>
<feature type="binding site" evidence="2">
    <location>
        <position position="54"/>
    </location>
    <ligand>
        <name>Zn(2+)</name>
        <dbReference type="ChEBI" id="CHEBI:29105"/>
    </ligand>
</feature>
<feature type="binding site" evidence="2">
    <location>
        <position position="86"/>
    </location>
    <ligand>
        <name>Zn(2+)</name>
        <dbReference type="ChEBI" id="CHEBI:29105"/>
    </ligand>
</feature>
<accession>P21369</accession>
<accession>P76229</accession>
<accession>P76910</accession>
<sequence length="213" mass="23362">MPPRALLLVDLQNDFCAGGALAVPEGDSTVDVANRLIDWCQSRGEAVIASQDWHPANHGSFASQHGVEPYTPGQLDGLPQTFWPDHCVQNSEGAQLHPLLHQKAIAAVFHKGENPLVDSYSAFFDNGRRQKTSLDDWLRDHEIDELIVMGLATDYCVKFTVLDALQLGYKVNVITDGCRGVNIQPQDSAHAFMEMSAAGATLYTLADWEETQG</sequence>
<gene>
    <name evidence="5" type="primary">pncA</name>
    <name type="synonym">nam</name>
    <name type="synonym">ydjB</name>
    <name type="ordered locus">b1768</name>
    <name type="ordered locus">JW1757</name>
</gene>
<name>PNCA_ECOLI</name>
<evidence type="ECO:0000250" key="1">
    <source>
        <dbReference type="UniProtKB" id="I6XD65"/>
    </source>
</evidence>
<evidence type="ECO:0000250" key="2">
    <source>
        <dbReference type="UniProtKB" id="P53184"/>
    </source>
</evidence>
<evidence type="ECO:0000269" key="3">
    <source>
    </source>
</evidence>
<evidence type="ECO:0000303" key="4">
    <source>
    </source>
</evidence>
<evidence type="ECO:0000303" key="5">
    <source>
    </source>
</evidence>
<evidence type="ECO:0000305" key="6"/>
<evidence type="ECO:0000305" key="7">
    <source>
    </source>
</evidence>
<evidence type="ECO:0000305" key="8">
    <source>
    </source>
</evidence>
<protein>
    <recommendedName>
        <fullName evidence="4 5">Nicotinamidase</fullName>
        <ecNumber evidence="3 8">3.5.1.19</ecNumber>
    </recommendedName>
    <alternativeName>
        <fullName evidence="4">Nicotinamide deamidase</fullName>
        <shortName evidence="5">NAMase</shortName>
    </alternativeName>
    <alternativeName>
        <fullName evidence="5">Pyrazinamidase</fullName>
        <shortName evidence="5">PZAase</shortName>
        <ecNumber evidence="8">3.5.1.-</ecNumber>
    </alternativeName>
</protein>
<organism>
    <name type="scientific">Escherichia coli (strain K12)</name>
    <dbReference type="NCBI Taxonomy" id="83333"/>
    <lineage>
        <taxon>Bacteria</taxon>
        <taxon>Pseudomonadati</taxon>
        <taxon>Pseudomonadota</taxon>
        <taxon>Gammaproteobacteria</taxon>
        <taxon>Enterobacterales</taxon>
        <taxon>Enterobacteriaceae</taxon>
        <taxon>Escherichia</taxon>
    </lineage>
</organism>
<reference key="1">
    <citation type="journal article" date="1989" name="Gene">
        <title>Structure and expression in Escherichia coli K-12 of the L-asparaginase I-encoding ansA gene and its flanking regions.</title>
        <authorList>
            <person name="Jerlstroem P.G."/>
            <person name="Bezjak D.A."/>
            <person name="Jennings M.P."/>
            <person name="Beacham I.R."/>
        </authorList>
    </citation>
    <scope>NUCLEOTIDE SEQUENCE [GENOMIC DNA]</scope>
    <scope>FUNCTION</scope>
    <scope>CATALYTIC ACTIVITY</scope>
    <source>
        <strain>K12</strain>
    </source>
</reference>
<reference key="2">
    <citation type="journal article" date="1996" name="Antimicrob. Agents Chemother.">
        <title>Identification, cloning, and expression of the Escherichia coli pyrazinamidase and nicotinamidase gene, pncA.</title>
        <authorList>
            <person name="Frothingham R."/>
            <person name="Meeker-O'Connell W.A."/>
            <person name="Talbot E.A."/>
            <person name="George J.W."/>
            <person name="Kreuzer K.N."/>
        </authorList>
    </citation>
    <scope>NUCLEOTIDE SEQUENCE [GENOMIC DNA]</scope>
</reference>
<reference key="3">
    <citation type="journal article" date="1996" name="DNA Res.">
        <title>A 570-kb DNA sequence of the Escherichia coli K-12 genome corresponding to the 28.0-40.1 min region on the linkage map.</title>
        <authorList>
            <person name="Aiba H."/>
            <person name="Baba T."/>
            <person name="Fujita K."/>
            <person name="Hayashi K."/>
            <person name="Inada T."/>
            <person name="Isono K."/>
            <person name="Itoh T."/>
            <person name="Kasai H."/>
            <person name="Kashimoto K."/>
            <person name="Kimura S."/>
            <person name="Kitakawa M."/>
            <person name="Kitagawa M."/>
            <person name="Makino K."/>
            <person name="Miki T."/>
            <person name="Mizobuchi K."/>
            <person name="Mori H."/>
            <person name="Mori T."/>
            <person name="Motomura K."/>
            <person name="Nakade S."/>
            <person name="Nakamura Y."/>
            <person name="Nashimoto H."/>
            <person name="Nishio Y."/>
            <person name="Oshima T."/>
            <person name="Saito N."/>
            <person name="Sampei G."/>
            <person name="Seki Y."/>
            <person name="Sivasundaram S."/>
            <person name="Tagami H."/>
            <person name="Takeda J."/>
            <person name="Takemoto K."/>
            <person name="Takeuchi Y."/>
            <person name="Wada C."/>
            <person name="Yamamoto Y."/>
            <person name="Horiuchi T."/>
        </authorList>
    </citation>
    <scope>NUCLEOTIDE SEQUENCE [LARGE SCALE GENOMIC DNA]</scope>
    <source>
        <strain>K12 / W3110 / ATCC 27325 / DSM 5911</strain>
    </source>
</reference>
<reference key="4">
    <citation type="journal article" date="1997" name="Science">
        <title>The complete genome sequence of Escherichia coli K-12.</title>
        <authorList>
            <person name="Blattner F.R."/>
            <person name="Plunkett G. III"/>
            <person name="Bloch C.A."/>
            <person name="Perna N.T."/>
            <person name="Burland V."/>
            <person name="Riley M."/>
            <person name="Collado-Vides J."/>
            <person name="Glasner J.D."/>
            <person name="Rode C.K."/>
            <person name="Mayhew G.F."/>
            <person name="Gregor J."/>
            <person name="Davis N.W."/>
            <person name="Kirkpatrick H.A."/>
            <person name="Goeden M.A."/>
            <person name="Rose D.J."/>
            <person name="Mau B."/>
            <person name="Shao Y."/>
        </authorList>
    </citation>
    <scope>NUCLEOTIDE SEQUENCE [LARGE SCALE GENOMIC DNA]</scope>
    <source>
        <strain>K12 / MG1655 / ATCC 47076</strain>
    </source>
</reference>
<reference key="5">
    <citation type="journal article" date="2006" name="Mol. Syst. Biol.">
        <title>Highly accurate genome sequences of Escherichia coli K-12 strains MG1655 and W3110.</title>
        <authorList>
            <person name="Hayashi K."/>
            <person name="Morooka N."/>
            <person name="Yamamoto Y."/>
            <person name="Fujita K."/>
            <person name="Isono K."/>
            <person name="Choi S."/>
            <person name="Ohtsubo E."/>
            <person name="Baba T."/>
            <person name="Wanner B.L."/>
            <person name="Mori H."/>
            <person name="Horiuchi T."/>
        </authorList>
    </citation>
    <scope>NUCLEOTIDE SEQUENCE [LARGE SCALE GENOMIC DNA]</scope>
    <source>
        <strain>K12 / W3110 / ATCC 27325 / DSM 5911</strain>
    </source>
</reference>
<reference key="6">
    <citation type="journal article" date="1971" name="J. Biol. Chem.">
        <title>Hyperproduction and purification of nicotinamide deamidase, a microconstitutive enzyme of Escherichia coli.</title>
        <authorList>
            <person name="Pardee A.B."/>
            <person name="Benz E.J. Jr."/>
            <person name="St Peter D.A."/>
            <person name="Krieger J.N."/>
            <person name="Meuth M."/>
            <person name="Trieshmann H.W. Jr."/>
        </authorList>
    </citation>
    <scope>FUNCTION</scope>
    <scope>CATALYTIC ACTIVITY</scope>
    <scope>BIOPHYSICOCHEMICAL PROPERTIES</scope>
    <scope>INDUCTION</scope>
    <scope>PATHWAY</scope>
    <source>
        <strain>K12</strain>
    </source>
</reference>
<keyword id="KW-0378">Hydrolase</keyword>
<keyword id="KW-0479">Metal-binding</keyword>
<keyword id="KW-0662">Pyridine nucleotide biosynthesis</keyword>
<keyword id="KW-1185">Reference proteome</keyword>
<keyword id="KW-0862">Zinc</keyword>